<comment type="function">
    <text evidence="1">Catalyzes the deamination of dCTP to dUTP.</text>
</comment>
<comment type="catalytic activity">
    <reaction evidence="1">
        <text>dCTP + H2O + H(+) = dUTP + NH4(+)</text>
        <dbReference type="Rhea" id="RHEA:22680"/>
        <dbReference type="ChEBI" id="CHEBI:15377"/>
        <dbReference type="ChEBI" id="CHEBI:15378"/>
        <dbReference type="ChEBI" id="CHEBI:28938"/>
        <dbReference type="ChEBI" id="CHEBI:61481"/>
        <dbReference type="ChEBI" id="CHEBI:61555"/>
        <dbReference type="EC" id="3.5.4.13"/>
    </reaction>
</comment>
<comment type="pathway">
    <text evidence="1">Pyrimidine metabolism; dUMP biosynthesis; dUMP from dCTP (dUTP route): step 1/2.</text>
</comment>
<comment type="subunit">
    <text evidence="1">Homotrimer.</text>
</comment>
<comment type="similarity">
    <text evidence="1">Belongs to the dCTP deaminase family.</text>
</comment>
<feature type="chain" id="PRO_1000009794" description="dCTP deaminase">
    <location>
        <begin position="1"/>
        <end position="188"/>
    </location>
</feature>
<feature type="active site" description="Proton donor/acceptor" evidence="1">
    <location>
        <position position="137"/>
    </location>
</feature>
<feature type="binding site" evidence="1">
    <location>
        <begin position="111"/>
        <end position="116"/>
    </location>
    <ligand>
        <name>dCTP</name>
        <dbReference type="ChEBI" id="CHEBI:61481"/>
    </ligand>
</feature>
<feature type="binding site" evidence="1">
    <location>
        <begin position="135"/>
        <end position="137"/>
    </location>
    <ligand>
        <name>dCTP</name>
        <dbReference type="ChEBI" id="CHEBI:61481"/>
    </ligand>
</feature>
<feature type="binding site" evidence="1">
    <location>
        <position position="156"/>
    </location>
    <ligand>
        <name>dCTP</name>
        <dbReference type="ChEBI" id="CHEBI:61481"/>
    </ligand>
</feature>
<feature type="binding site" evidence="1">
    <location>
        <position position="170"/>
    </location>
    <ligand>
        <name>dCTP</name>
        <dbReference type="ChEBI" id="CHEBI:61481"/>
    </ligand>
</feature>
<feature type="binding site" evidence="1">
    <location>
        <position position="180"/>
    </location>
    <ligand>
        <name>dCTP</name>
        <dbReference type="ChEBI" id="CHEBI:61481"/>
    </ligand>
</feature>
<evidence type="ECO:0000255" key="1">
    <source>
        <dbReference type="HAMAP-Rule" id="MF_00146"/>
    </source>
</evidence>
<accession>Q474W3</accession>
<gene>
    <name evidence="1" type="primary">dcd</name>
    <name type="ordered locus">Reut_A0688</name>
</gene>
<name>DCD_CUPPJ</name>
<reference key="1">
    <citation type="journal article" date="2010" name="PLoS ONE">
        <title>The complete multipartite genome sequence of Cupriavidus necator JMP134, a versatile pollutant degrader.</title>
        <authorList>
            <person name="Lykidis A."/>
            <person name="Perez-Pantoja D."/>
            <person name="Ledger T."/>
            <person name="Mavromatis K."/>
            <person name="Anderson I.J."/>
            <person name="Ivanova N.N."/>
            <person name="Hooper S.D."/>
            <person name="Lapidus A."/>
            <person name="Lucas S."/>
            <person name="Gonzalez B."/>
            <person name="Kyrpides N.C."/>
        </authorList>
    </citation>
    <scope>NUCLEOTIDE SEQUENCE [LARGE SCALE GENOMIC DNA]</scope>
    <source>
        <strain>JMP134 / LMG 1197</strain>
    </source>
</reference>
<proteinExistence type="inferred from homology"/>
<protein>
    <recommendedName>
        <fullName evidence="1">dCTP deaminase</fullName>
        <ecNumber evidence="1">3.5.4.13</ecNumber>
    </recommendedName>
    <alternativeName>
        <fullName evidence="1">Deoxycytidine triphosphate deaminase</fullName>
    </alternativeName>
</protein>
<keyword id="KW-0378">Hydrolase</keyword>
<keyword id="KW-0546">Nucleotide metabolism</keyword>
<keyword id="KW-0547">Nucleotide-binding</keyword>
<dbReference type="EC" id="3.5.4.13" evidence="1"/>
<dbReference type="EMBL" id="CP000090">
    <property type="protein sequence ID" value="AAZ60070.1"/>
    <property type="molecule type" value="Genomic_DNA"/>
</dbReference>
<dbReference type="SMR" id="Q474W3"/>
<dbReference type="STRING" id="264198.Reut_A0688"/>
<dbReference type="KEGG" id="reu:Reut_A0688"/>
<dbReference type="eggNOG" id="COG0717">
    <property type="taxonomic scope" value="Bacteria"/>
</dbReference>
<dbReference type="HOGENOM" id="CLU_087476_4_0_4"/>
<dbReference type="OrthoDB" id="9780956at2"/>
<dbReference type="UniPathway" id="UPA00610">
    <property type="reaction ID" value="UER00665"/>
</dbReference>
<dbReference type="GO" id="GO:0008829">
    <property type="term" value="F:dCTP deaminase activity"/>
    <property type="evidence" value="ECO:0007669"/>
    <property type="project" value="UniProtKB-UniRule"/>
</dbReference>
<dbReference type="GO" id="GO:0000166">
    <property type="term" value="F:nucleotide binding"/>
    <property type="evidence" value="ECO:0007669"/>
    <property type="project" value="UniProtKB-KW"/>
</dbReference>
<dbReference type="GO" id="GO:0006226">
    <property type="term" value="P:dUMP biosynthetic process"/>
    <property type="evidence" value="ECO:0007669"/>
    <property type="project" value="UniProtKB-UniPathway"/>
</dbReference>
<dbReference type="GO" id="GO:0006229">
    <property type="term" value="P:dUTP biosynthetic process"/>
    <property type="evidence" value="ECO:0007669"/>
    <property type="project" value="UniProtKB-UniRule"/>
</dbReference>
<dbReference type="GO" id="GO:0015949">
    <property type="term" value="P:nucleobase-containing small molecule interconversion"/>
    <property type="evidence" value="ECO:0007669"/>
    <property type="project" value="TreeGrafter"/>
</dbReference>
<dbReference type="CDD" id="cd07557">
    <property type="entry name" value="trimeric_dUTPase"/>
    <property type="match status" value="1"/>
</dbReference>
<dbReference type="FunFam" id="2.70.40.10:FF:000001">
    <property type="entry name" value="dCTP deaminase"/>
    <property type="match status" value="1"/>
</dbReference>
<dbReference type="Gene3D" id="2.70.40.10">
    <property type="match status" value="1"/>
</dbReference>
<dbReference type="HAMAP" id="MF_00146">
    <property type="entry name" value="dCTP_deaminase"/>
    <property type="match status" value="1"/>
</dbReference>
<dbReference type="InterPro" id="IPR011962">
    <property type="entry name" value="dCTP_deaminase"/>
</dbReference>
<dbReference type="InterPro" id="IPR036157">
    <property type="entry name" value="dUTPase-like_sf"/>
</dbReference>
<dbReference type="InterPro" id="IPR033704">
    <property type="entry name" value="dUTPase_trimeric"/>
</dbReference>
<dbReference type="NCBIfam" id="TIGR02274">
    <property type="entry name" value="dCTP_deam"/>
    <property type="match status" value="1"/>
</dbReference>
<dbReference type="PANTHER" id="PTHR42680">
    <property type="entry name" value="DCTP DEAMINASE"/>
    <property type="match status" value="1"/>
</dbReference>
<dbReference type="PANTHER" id="PTHR42680:SF3">
    <property type="entry name" value="DCTP DEAMINASE"/>
    <property type="match status" value="1"/>
</dbReference>
<dbReference type="Pfam" id="PF22769">
    <property type="entry name" value="DCD"/>
    <property type="match status" value="1"/>
</dbReference>
<dbReference type="SUPFAM" id="SSF51283">
    <property type="entry name" value="dUTPase-like"/>
    <property type="match status" value="1"/>
</dbReference>
<sequence>MSIKSDKWIRRMAEQHGMIEPFEPGQVREADGRKIVSYGTSSYGYDIRCADEFKIFTNINSTIVDPKNFDEKSFVDFKGDVCIIPPNSFALARTMEYFRIPRSVLTICLGKSTYARCGIIVNVTPFEPEWEGYVTLEFSNTTPLPAKIYAGEGCAQVLFFESDEVCETSYADRGGKYQGQHGVTLPKA</sequence>
<organism>
    <name type="scientific">Cupriavidus pinatubonensis (strain JMP 134 / LMG 1197)</name>
    <name type="common">Cupriavidus necator (strain JMP 134)</name>
    <dbReference type="NCBI Taxonomy" id="264198"/>
    <lineage>
        <taxon>Bacteria</taxon>
        <taxon>Pseudomonadati</taxon>
        <taxon>Pseudomonadota</taxon>
        <taxon>Betaproteobacteria</taxon>
        <taxon>Burkholderiales</taxon>
        <taxon>Burkholderiaceae</taxon>
        <taxon>Cupriavidus</taxon>
    </lineage>
</organism>